<dbReference type="GO" id="GO:0005576">
    <property type="term" value="C:extracellular region"/>
    <property type="evidence" value="ECO:0007669"/>
    <property type="project" value="UniProtKB-SubCell"/>
</dbReference>
<dbReference type="GO" id="GO:0006952">
    <property type="term" value="P:defense response"/>
    <property type="evidence" value="ECO:0007669"/>
    <property type="project" value="UniProtKB-KW"/>
</dbReference>
<reference key="1">
    <citation type="journal article" date="1993" name="J. Chem. Res.">
        <title>Peptides from Australian frogs. The structures of the caerins and caeridins from Litoria gilleni.</title>
        <authorList>
            <person name="Waugh R.J."/>
            <person name="Stone D.J.M."/>
            <person name="Bowie J.H."/>
            <person name="Wallace J.C."/>
            <person name="Tyler M.J."/>
        </authorList>
    </citation>
    <scope>PROTEIN SEQUENCE</scope>
    <scope>AMIDATION AT LEU-15</scope>
    <scope>MASS SPECTROMETRY</scope>
    <source>
        <tissue>Parotoid gland</tissue>
    </source>
</reference>
<proteinExistence type="evidence at protein level"/>
<protein>
    <recommendedName>
        <fullName>Caeridin-3</fullName>
    </recommendedName>
</protein>
<comment type="function">
    <text>Caeridins show neither neuropeptide activity nor antibiotic activity.</text>
</comment>
<comment type="subcellular location">
    <subcellularLocation>
        <location>Secreted</location>
    </subcellularLocation>
</comment>
<comment type="tissue specificity">
    <text>Expressed by the skin parotoid and/or rostral glands.</text>
</comment>
<comment type="mass spectrometry"/>
<sequence>GLFDAIGNLLGGLGL</sequence>
<feature type="peptide" id="PRO_0000043762" description="Caeridin-3">
    <location>
        <begin position="1"/>
        <end position="15"/>
    </location>
</feature>
<feature type="modified residue" description="Leucine amide" evidence="1">
    <location>
        <position position="15"/>
    </location>
</feature>
<evidence type="ECO:0000269" key="1">
    <source ref="1"/>
</evidence>
<name>CDN3_RANGI</name>
<keyword id="KW-0027">Amidation</keyword>
<keyword id="KW-0878">Amphibian defense peptide</keyword>
<keyword id="KW-0903">Direct protein sequencing</keyword>
<keyword id="KW-0964">Secreted</keyword>
<organism>
    <name type="scientific">Ranoidea gilleni</name>
    <name type="common">Centralian tree frog</name>
    <name type="synonym">Litoria gilleni</name>
    <dbReference type="NCBI Taxonomy" id="39405"/>
    <lineage>
        <taxon>Eukaryota</taxon>
        <taxon>Metazoa</taxon>
        <taxon>Chordata</taxon>
        <taxon>Craniata</taxon>
        <taxon>Vertebrata</taxon>
        <taxon>Euteleostomi</taxon>
        <taxon>Amphibia</taxon>
        <taxon>Batrachia</taxon>
        <taxon>Anura</taxon>
        <taxon>Neobatrachia</taxon>
        <taxon>Hyloidea</taxon>
        <taxon>Hylidae</taxon>
        <taxon>Pelodryadinae</taxon>
        <taxon>Ranoidea</taxon>
    </lineage>
</organism>
<accession>P56248</accession>